<accession>Q8HY10</accession>
<reference key="1">
    <citation type="journal article" date="2003" name="J. Virol.">
        <title>Novel member of the CD209 (DC-SIGN) gene family in primates.</title>
        <authorList>
            <person name="Bashirova A.A."/>
            <person name="Wu L."/>
            <person name="Cheng J."/>
            <person name="Martin T.D."/>
            <person name="Martin M.P."/>
            <person name="Benveniste R.E."/>
            <person name="Lifson J.D."/>
            <person name="Kewalramani V.N."/>
            <person name="Hughes A."/>
            <person name="Carrington M."/>
        </authorList>
    </citation>
    <scope>NUCLEOTIDE SEQUENCE [GENOMIC DNA]</scope>
    <source>
        <strain>Isolate B128</strain>
    </source>
</reference>
<protein>
    <recommendedName>
        <fullName>C-type lectin domain family 4 member M</fullName>
    </recommendedName>
    <alternativeName>
        <fullName>CD209 antigen-like protein 1</fullName>
    </alternativeName>
    <cdAntigenName>CD299</cdAntigenName>
</protein>
<organism>
    <name type="scientific">Nomascus concolor</name>
    <name type="common">Black crested gibbon</name>
    <name type="synonym">Hylobates concolor</name>
    <dbReference type="NCBI Taxonomy" id="29089"/>
    <lineage>
        <taxon>Eukaryota</taxon>
        <taxon>Metazoa</taxon>
        <taxon>Chordata</taxon>
        <taxon>Craniata</taxon>
        <taxon>Vertebrata</taxon>
        <taxon>Euteleostomi</taxon>
        <taxon>Mammalia</taxon>
        <taxon>Eutheria</taxon>
        <taxon>Euarchontoglires</taxon>
        <taxon>Primates</taxon>
        <taxon>Haplorrhini</taxon>
        <taxon>Catarrhini</taxon>
        <taxon>Hylobatidae</taxon>
        <taxon>Nomascus</taxon>
    </lineage>
</organism>
<comment type="function">
    <text evidence="1">Probable pathogen-recognition receptor involved in peripheral immune surveillance in liver. May mediate the endocytosis of pathogens which are subsequently degraded in lysosomal compartments. Probably recognizes in a calcium-dependent manner high mannose N-linked oligosaccharides in a variety of pathogen antigens. Is a receptor for ICAM3, probably by binding to mannose-like carbohydrates (By similarity).</text>
</comment>
<comment type="subunit">
    <text evidence="1">Homotetramer.</text>
</comment>
<comment type="subcellular location">
    <subcellularLocation>
        <location evidence="1">Membrane</location>
        <topology evidence="1">Single-pass type II membrane protein</topology>
    </subcellularLocation>
</comment>
<comment type="domain">
    <text evidence="1">The tandem repeat domain, also called neck domain, mediates oligomerization.</text>
</comment>
<name>CLC4M_NOMCO</name>
<keyword id="KW-1064">Adaptive immunity</keyword>
<keyword id="KW-0106">Calcium</keyword>
<keyword id="KW-1015">Disulfide bond</keyword>
<keyword id="KW-0254">Endocytosis</keyword>
<keyword id="KW-0325">Glycoprotein</keyword>
<keyword id="KW-0391">Immunity</keyword>
<keyword id="KW-0399">Innate immunity</keyword>
<keyword id="KW-0430">Lectin</keyword>
<keyword id="KW-0465">Mannose-binding</keyword>
<keyword id="KW-0472">Membrane</keyword>
<keyword id="KW-0479">Metal-binding</keyword>
<keyword id="KW-0675">Receptor</keyword>
<keyword id="KW-0677">Repeat</keyword>
<keyword id="KW-0735">Signal-anchor</keyword>
<keyword id="KW-0812">Transmembrane</keyword>
<keyword id="KW-1133">Transmembrane helix</keyword>
<feature type="chain" id="PRO_0000046627" description="C-type lectin domain family 4 member M">
    <location>
        <begin position="1"/>
        <end position="399"/>
    </location>
</feature>
<feature type="topological domain" description="Cytoplasmic" evidence="2">
    <location>
        <begin position="1"/>
        <end position="49"/>
    </location>
</feature>
<feature type="transmembrane region" description="Helical; Signal-anchor for type II membrane protein" evidence="2">
    <location>
        <begin position="50"/>
        <end position="70"/>
    </location>
</feature>
<feature type="topological domain" description="Extracellular" evidence="2">
    <location>
        <begin position="71"/>
        <end position="399"/>
    </location>
</feature>
<feature type="repeat" description="1">
    <location>
        <begin position="108"/>
        <end position="130"/>
    </location>
</feature>
<feature type="repeat" description="2">
    <location>
        <begin position="131"/>
        <end position="153"/>
    </location>
</feature>
<feature type="repeat" description="3">
    <location>
        <begin position="154"/>
        <end position="176"/>
    </location>
</feature>
<feature type="repeat" description="4">
    <location>
        <begin position="177"/>
        <end position="199"/>
    </location>
</feature>
<feature type="repeat" description="5">
    <location>
        <begin position="200"/>
        <end position="222"/>
    </location>
</feature>
<feature type="repeat" description="6">
    <location>
        <begin position="223"/>
        <end position="245"/>
    </location>
</feature>
<feature type="repeat" description="7">
    <location>
        <begin position="246"/>
        <end position="268"/>
    </location>
</feature>
<feature type="domain" description="C-type lectin" evidence="3">
    <location>
        <begin position="274"/>
        <end position="390"/>
    </location>
</feature>
<feature type="region of interest" description="7 X approximate tandem repeats">
    <location>
        <begin position="108"/>
        <end position="269"/>
    </location>
</feature>
<feature type="short sequence motif" description="Endocytosis signal" evidence="1">
    <location>
        <begin position="14"/>
        <end position="15"/>
    </location>
</feature>
<feature type="binding site" evidence="1">
    <location>
        <position position="359"/>
    </location>
    <ligand>
        <name>Ca(2+)</name>
        <dbReference type="ChEBI" id="CHEBI:29108"/>
    </ligand>
</feature>
<feature type="binding site" evidence="1">
    <location>
        <position position="361"/>
    </location>
    <ligand>
        <name>Ca(2+)</name>
        <dbReference type="ChEBI" id="CHEBI:29108"/>
    </ligand>
</feature>
<feature type="binding site" evidence="1">
    <location>
        <position position="363"/>
    </location>
    <ligand>
        <name>Ca(2+)</name>
        <dbReference type="ChEBI" id="CHEBI:29108"/>
    </ligand>
</feature>
<feature type="binding site" evidence="1">
    <location>
        <position position="366"/>
    </location>
    <ligand>
        <name>Ca(2+)</name>
        <dbReference type="ChEBI" id="CHEBI:29108"/>
    </ligand>
</feature>
<feature type="binding site" evidence="1">
    <location>
        <position position="377"/>
    </location>
    <ligand>
        <name>Ca(2+)</name>
        <dbReference type="ChEBI" id="CHEBI:29108"/>
    </ligand>
</feature>
<feature type="binding site" evidence="1">
    <location>
        <position position="378"/>
    </location>
    <ligand>
        <name>Ca(2+)</name>
        <dbReference type="ChEBI" id="CHEBI:29108"/>
    </ligand>
</feature>
<feature type="glycosylation site" description="N-linked (GlcNAc...) asparagine" evidence="2">
    <location>
        <position position="92"/>
    </location>
</feature>
<feature type="glycosylation site" description="N-linked (GlcNAc...) asparagine" evidence="2">
    <location>
        <position position="361"/>
    </location>
</feature>
<feature type="disulfide bond" evidence="3">
    <location>
        <begin position="265"/>
        <end position="395"/>
    </location>
</feature>
<feature type="disulfide bond" evidence="3">
    <location>
        <begin position="268"/>
        <end position="279"/>
    </location>
</feature>
<feature type="disulfide bond" evidence="3">
    <location>
        <begin position="296"/>
        <end position="389"/>
    </location>
</feature>
<feature type="disulfide bond" evidence="3">
    <location>
        <begin position="368"/>
        <end position="381"/>
    </location>
</feature>
<proteinExistence type="inferred from homology"/>
<gene>
    <name type="primary">CLEC4M</name>
    <name type="synonym">CD209L1</name>
</gene>
<sequence>MSDSKEQRVQPLGLLEEDPTTSGIRLFPRDFQFQQTHGHKSSTGCLGHGPLVLQLLSFTLLAGFLVAILVQVYKGPSSLSQEQSEQDVIYQNLTQLKAAVGELSEKSKLQEIYQELTQLKAAVGELPEKSRLQEIYQELTRLKAAVGELPENSRLQEIYQELTQLKAAVGELPEKSKQQEIYQELTRLKAAVGELPEKSKQQEIYQELTRLKAAVGELPEKSKQQEIYQELTRLKAAVGELPDQSKQQQIYQELTDLKTAFERLCCRCPKDWTFFQGNCYFISNSQRNWHDSVTACQEVGAQLVVIKSAEEQNFLQLQSSRSNRFTWMGLSDLNQEGTWQWVDGSPLSSSFQRYWNSGEPNNSGDEDCAEFSGSGWNDNRCNVDNYWICKKPTACFRDE</sequence>
<evidence type="ECO:0000250" key="1"/>
<evidence type="ECO:0000255" key="2"/>
<evidence type="ECO:0000255" key="3">
    <source>
        <dbReference type="PROSITE-ProRule" id="PRU00040"/>
    </source>
</evidence>
<dbReference type="EMBL" id="AY078827">
    <property type="protein sequence ID" value="AAL89530.1"/>
    <property type="molecule type" value="Genomic_DNA"/>
</dbReference>
<dbReference type="EMBL" id="AY078821">
    <property type="protein sequence ID" value="AAL89530.1"/>
    <property type="status" value="JOINED"/>
    <property type="molecule type" value="Genomic_DNA"/>
</dbReference>
<dbReference type="EMBL" id="AY078822">
    <property type="protein sequence ID" value="AAL89530.1"/>
    <property type="status" value="JOINED"/>
    <property type="molecule type" value="Genomic_DNA"/>
</dbReference>
<dbReference type="EMBL" id="AY078823">
    <property type="protein sequence ID" value="AAL89530.1"/>
    <property type="status" value="JOINED"/>
    <property type="molecule type" value="Genomic_DNA"/>
</dbReference>
<dbReference type="EMBL" id="AY078824">
    <property type="protein sequence ID" value="AAL89530.1"/>
    <property type="status" value="JOINED"/>
    <property type="molecule type" value="Genomic_DNA"/>
</dbReference>
<dbReference type="EMBL" id="AY078825">
    <property type="protein sequence ID" value="AAL89530.1"/>
    <property type="status" value="JOINED"/>
    <property type="molecule type" value="Genomic_DNA"/>
</dbReference>
<dbReference type="EMBL" id="AY078826">
    <property type="protein sequence ID" value="AAL89530.1"/>
    <property type="status" value="JOINED"/>
    <property type="molecule type" value="Genomic_DNA"/>
</dbReference>
<dbReference type="SMR" id="Q8HY10"/>
<dbReference type="GlyCosmos" id="Q8HY10">
    <property type="glycosylation" value="2 sites, No reported glycans"/>
</dbReference>
<dbReference type="GO" id="GO:0016020">
    <property type="term" value="C:membrane"/>
    <property type="evidence" value="ECO:0007669"/>
    <property type="project" value="UniProtKB-SubCell"/>
</dbReference>
<dbReference type="GO" id="GO:0005537">
    <property type="term" value="F:D-mannose binding"/>
    <property type="evidence" value="ECO:0007669"/>
    <property type="project" value="UniProtKB-KW"/>
</dbReference>
<dbReference type="GO" id="GO:0046872">
    <property type="term" value="F:metal ion binding"/>
    <property type="evidence" value="ECO:0007669"/>
    <property type="project" value="UniProtKB-KW"/>
</dbReference>
<dbReference type="GO" id="GO:0002250">
    <property type="term" value="P:adaptive immune response"/>
    <property type="evidence" value="ECO:0007669"/>
    <property type="project" value="UniProtKB-KW"/>
</dbReference>
<dbReference type="GO" id="GO:0006897">
    <property type="term" value="P:endocytosis"/>
    <property type="evidence" value="ECO:0007669"/>
    <property type="project" value="UniProtKB-KW"/>
</dbReference>
<dbReference type="GO" id="GO:0045087">
    <property type="term" value="P:innate immune response"/>
    <property type="evidence" value="ECO:0007669"/>
    <property type="project" value="UniProtKB-KW"/>
</dbReference>
<dbReference type="CDD" id="cd03590">
    <property type="entry name" value="CLECT_DC-SIGN_like"/>
    <property type="match status" value="1"/>
</dbReference>
<dbReference type="FunFam" id="3.10.100.10:FF:000044">
    <property type="entry name" value="CD209 antigen, isoform CRA_b"/>
    <property type="match status" value="1"/>
</dbReference>
<dbReference type="Gene3D" id="3.10.100.10">
    <property type="entry name" value="Mannose-Binding Protein A, subunit A"/>
    <property type="match status" value="1"/>
</dbReference>
<dbReference type="InterPro" id="IPR001304">
    <property type="entry name" value="C-type_lectin-like"/>
</dbReference>
<dbReference type="InterPro" id="IPR016186">
    <property type="entry name" value="C-type_lectin-like/link_sf"/>
</dbReference>
<dbReference type="InterPro" id="IPR050111">
    <property type="entry name" value="C-type_lectin/snaclec_domain"/>
</dbReference>
<dbReference type="InterPro" id="IPR018378">
    <property type="entry name" value="C-type_lectin_CS"/>
</dbReference>
<dbReference type="InterPro" id="IPR033989">
    <property type="entry name" value="CD209-like_CTLD"/>
</dbReference>
<dbReference type="InterPro" id="IPR016187">
    <property type="entry name" value="CTDL_fold"/>
</dbReference>
<dbReference type="PANTHER" id="PTHR22803">
    <property type="entry name" value="MANNOSE, PHOSPHOLIPASE, LECTIN RECEPTOR RELATED"/>
    <property type="match status" value="1"/>
</dbReference>
<dbReference type="Pfam" id="PF00059">
    <property type="entry name" value="Lectin_C"/>
    <property type="match status" value="1"/>
</dbReference>
<dbReference type="SMART" id="SM00034">
    <property type="entry name" value="CLECT"/>
    <property type="match status" value="1"/>
</dbReference>
<dbReference type="SUPFAM" id="SSF56436">
    <property type="entry name" value="C-type lectin-like"/>
    <property type="match status" value="1"/>
</dbReference>
<dbReference type="PROSITE" id="PS00615">
    <property type="entry name" value="C_TYPE_LECTIN_1"/>
    <property type="match status" value="1"/>
</dbReference>
<dbReference type="PROSITE" id="PS50041">
    <property type="entry name" value="C_TYPE_LECTIN_2"/>
    <property type="match status" value="1"/>
</dbReference>